<sequence length="267" mass="28832">MSGGGVIRGPAGNNDCRIYVGNLPPDIRTKDIEDVFYKYGAIRDIDLKNRRGGPPFAFVEFEDPRDAEDAVYGRDGYDYDGYRLRVEFPRSGRGAGGRGGGGGGGGGGGGGGGGGGGGGGGGGGGAPRGRYGPPSRRSEYRVVVSGLPPSGSWQDLKDHMREAGDVCYADVFRDGTGVVEFVRKEDMTYAVRKLDNTKFRSHEGETAYIRVKVDGPRSPSYGRSRSRSRSRSRSRSRSNSRSRSYSPRRSRGSPRYSPRHSRSRSRT</sequence>
<name>SRSF1_XENTR</name>
<gene>
    <name type="primary">srsf1</name>
    <name type="synonym">sfrs1</name>
</gene>
<proteinExistence type="evidence at transcript level"/>
<feature type="chain" id="PRO_0000081916" description="Serine/arginine-rich splicing factor 1">
    <location>
        <begin position="1"/>
        <end position="267"/>
    </location>
</feature>
<feature type="domain" description="RRM 1" evidence="3">
    <location>
        <begin position="16"/>
        <end position="91"/>
    </location>
</feature>
<feature type="domain" description="RRM 2" evidence="3">
    <location>
        <begin position="140"/>
        <end position="214"/>
    </location>
</feature>
<feature type="region of interest" description="Disordered" evidence="4">
    <location>
        <begin position="90"/>
        <end position="137"/>
    </location>
</feature>
<feature type="region of interest" description="Disordered" evidence="4">
    <location>
        <begin position="212"/>
        <end position="267"/>
    </location>
</feature>
<feature type="compositionally biased region" description="Gly residues" evidence="4">
    <location>
        <begin position="93"/>
        <end position="127"/>
    </location>
</feature>
<feature type="compositionally biased region" description="Basic residues" evidence="4">
    <location>
        <begin position="224"/>
        <end position="267"/>
    </location>
</feature>
<reference key="1">
    <citation type="submission" date="2004-06" db="EMBL/GenBank/DDBJ databases">
        <authorList>
            <consortium name="NIH - Xenopus Gene Collection (XGC) project"/>
        </authorList>
    </citation>
    <scope>NUCLEOTIDE SEQUENCE [LARGE SCALE MRNA]</scope>
    <source>
        <tissue>Embryo</tissue>
    </source>
</reference>
<protein>
    <recommendedName>
        <fullName>Serine/arginine-rich splicing factor 1</fullName>
    </recommendedName>
    <alternativeName>
        <fullName>Splicing factor, arginine/serine-rich 1</fullName>
    </alternativeName>
</protein>
<dbReference type="EMBL" id="BC075558">
    <property type="protein sequence ID" value="AAH75558.1"/>
    <property type="molecule type" value="mRNA"/>
</dbReference>
<dbReference type="RefSeq" id="NP_001006919.1">
    <property type="nucleotide sequence ID" value="NM_001006918.1"/>
</dbReference>
<dbReference type="BMRB" id="Q6DII2"/>
<dbReference type="SMR" id="Q6DII2"/>
<dbReference type="FunCoup" id="Q6DII2">
    <property type="interactions" value="4394"/>
</dbReference>
<dbReference type="STRING" id="8364.ENSXETP00000039072"/>
<dbReference type="DNASU" id="448766"/>
<dbReference type="GeneID" id="448766"/>
<dbReference type="KEGG" id="xtr:448766"/>
<dbReference type="AGR" id="Xenbase:XB-GENE-486875"/>
<dbReference type="CTD" id="6426"/>
<dbReference type="Xenbase" id="XB-GENE-486875">
    <property type="gene designation" value="srsf1"/>
</dbReference>
<dbReference type="eggNOG" id="KOG0105">
    <property type="taxonomic scope" value="Eukaryota"/>
</dbReference>
<dbReference type="InParanoid" id="Q6DII2"/>
<dbReference type="OMA" id="PREPAYP"/>
<dbReference type="OrthoDB" id="1099063at2759"/>
<dbReference type="PhylomeDB" id="Q6DII2"/>
<dbReference type="Proteomes" id="UP000008143">
    <property type="component" value="Chromosome 2"/>
</dbReference>
<dbReference type="Bgee" id="ENSXETG00000008954">
    <property type="expression patterns" value="Expressed in gastrula and 25 other cell types or tissues"/>
</dbReference>
<dbReference type="GO" id="GO:0005737">
    <property type="term" value="C:cytoplasm"/>
    <property type="evidence" value="ECO:0007669"/>
    <property type="project" value="UniProtKB-SubCell"/>
</dbReference>
<dbReference type="GO" id="GO:0016607">
    <property type="term" value="C:nuclear speck"/>
    <property type="evidence" value="ECO:0007669"/>
    <property type="project" value="UniProtKB-SubCell"/>
</dbReference>
<dbReference type="GO" id="GO:0003723">
    <property type="term" value="F:RNA binding"/>
    <property type="evidence" value="ECO:0007669"/>
    <property type="project" value="UniProtKB-KW"/>
</dbReference>
<dbReference type="GO" id="GO:0006397">
    <property type="term" value="P:mRNA processing"/>
    <property type="evidence" value="ECO:0007669"/>
    <property type="project" value="UniProtKB-KW"/>
</dbReference>
<dbReference type="GO" id="GO:0008380">
    <property type="term" value="P:RNA splicing"/>
    <property type="evidence" value="ECO:0007669"/>
    <property type="project" value="UniProtKB-KW"/>
</dbReference>
<dbReference type="CDD" id="cd12597">
    <property type="entry name" value="RRM1_SRSF1"/>
    <property type="match status" value="1"/>
</dbReference>
<dbReference type="CDD" id="cd12767">
    <property type="entry name" value="RRM2_SRSF1"/>
    <property type="match status" value="1"/>
</dbReference>
<dbReference type="FunFam" id="3.30.70.330:FF:000053">
    <property type="entry name" value="Serine/arginine-rich splicing factor 1"/>
    <property type="match status" value="1"/>
</dbReference>
<dbReference type="FunFam" id="3.30.70.330:FF:000170">
    <property type="entry name" value="Serine/arginine-rich splicing factor 1"/>
    <property type="match status" value="1"/>
</dbReference>
<dbReference type="Gene3D" id="3.30.70.330">
    <property type="match status" value="2"/>
</dbReference>
<dbReference type="InterPro" id="IPR012677">
    <property type="entry name" value="Nucleotide-bd_a/b_plait_sf"/>
</dbReference>
<dbReference type="InterPro" id="IPR035979">
    <property type="entry name" value="RBD_domain_sf"/>
</dbReference>
<dbReference type="InterPro" id="IPR000504">
    <property type="entry name" value="RRM_dom"/>
</dbReference>
<dbReference type="InterPro" id="IPR050374">
    <property type="entry name" value="RRT5_SRSF_SR"/>
</dbReference>
<dbReference type="InterPro" id="IPR034520">
    <property type="entry name" value="SRSF1_RRM1"/>
</dbReference>
<dbReference type="InterPro" id="IPR029538">
    <property type="entry name" value="SRSF1_RRM2"/>
</dbReference>
<dbReference type="PANTHER" id="PTHR23003">
    <property type="entry name" value="RNA RECOGNITION MOTIF RRM DOMAIN CONTAINING PROTEIN"/>
    <property type="match status" value="1"/>
</dbReference>
<dbReference type="PANTHER" id="PTHR23003:SF66">
    <property type="entry name" value="SERINE_ARGININE-RICH SPLICING FACTOR 1"/>
    <property type="match status" value="1"/>
</dbReference>
<dbReference type="Pfam" id="PF00076">
    <property type="entry name" value="RRM_1"/>
    <property type="match status" value="2"/>
</dbReference>
<dbReference type="SMART" id="SM00360">
    <property type="entry name" value="RRM"/>
    <property type="match status" value="2"/>
</dbReference>
<dbReference type="SUPFAM" id="SSF54928">
    <property type="entry name" value="RNA-binding domain, RBD"/>
    <property type="match status" value="1"/>
</dbReference>
<dbReference type="PROSITE" id="PS50102">
    <property type="entry name" value="RRM"/>
    <property type="match status" value="2"/>
</dbReference>
<comment type="function">
    <text evidence="1">May play a role in preventing exon skipping, ensuring the accuracy of splicing and regulating alternative splicing.</text>
</comment>
<comment type="subcellular location">
    <subcellularLocation>
        <location evidence="2">Cytoplasm</location>
    </subcellularLocation>
    <subcellularLocation>
        <location evidence="2">Nucleus speckle</location>
    </subcellularLocation>
    <text evidence="2">In nuclear speckles. Shuttles between the nucleus and the cytoplasm.</text>
</comment>
<comment type="similarity">
    <text evidence="5">Belongs to the splicing factor SR family.</text>
</comment>
<evidence type="ECO:0000250" key="1"/>
<evidence type="ECO:0000250" key="2">
    <source>
        <dbReference type="UniProtKB" id="Q07955"/>
    </source>
</evidence>
<evidence type="ECO:0000255" key="3">
    <source>
        <dbReference type="PROSITE-ProRule" id="PRU00176"/>
    </source>
</evidence>
<evidence type="ECO:0000256" key="4">
    <source>
        <dbReference type="SAM" id="MobiDB-lite"/>
    </source>
</evidence>
<evidence type="ECO:0000305" key="5"/>
<keyword id="KW-0963">Cytoplasm</keyword>
<keyword id="KW-0507">mRNA processing</keyword>
<keyword id="KW-0508">mRNA splicing</keyword>
<keyword id="KW-0539">Nucleus</keyword>
<keyword id="KW-1185">Reference proteome</keyword>
<keyword id="KW-0677">Repeat</keyword>
<keyword id="KW-0694">RNA-binding</keyword>
<accession>Q6DII2</accession>
<organism>
    <name type="scientific">Xenopus tropicalis</name>
    <name type="common">Western clawed frog</name>
    <name type="synonym">Silurana tropicalis</name>
    <dbReference type="NCBI Taxonomy" id="8364"/>
    <lineage>
        <taxon>Eukaryota</taxon>
        <taxon>Metazoa</taxon>
        <taxon>Chordata</taxon>
        <taxon>Craniata</taxon>
        <taxon>Vertebrata</taxon>
        <taxon>Euteleostomi</taxon>
        <taxon>Amphibia</taxon>
        <taxon>Batrachia</taxon>
        <taxon>Anura</taxon>
        <taxon>Pipoidea</taxon>
        <taxon>Pipidae</taxon>
        <taxon>Xenopodinae</taxon>
        <taxon>Xenopus</taxon>
        <taxon>Silurana</taxon>
    </lineage>
</organism>